<protein>
    <recommendedName>
        <fullName evidence="1">Probable nicotinate-nucleotide adenylyltransferase</fullName>
        <ecNumber evidence="1">2.7.7.18</ecNumber>
    </recommendedName>
    <alternativeName>
        <fullName evidence="1">Deamido-NAD(+) diphosphorylase</fullName>
    </alternativeName>
    <alternativeName>
        <fullName evidence="1">Deamido-NAD(+) pyrophosphorylase</fullName>
    </alternativeName>
    <alternativeName>
        <fullName evidence="1">Nicotinate mononucleotide adenylyltransferase</fullName>
        <shortName evidence="1">NaMN adenylyltransferase</shortName>
    </alternativeName>
</protein>
<organism>
    <name type="scientific">Corynebacterium jeikeium (strain K411)</name>
    <dbReference type="NCBI Taxonomy" id="306537"/>
    <lineage>
        <taxon>Bacteria</taxon>
        <taxon>Bacillati</taxon>
        <taxon>Actinomycetota</taxon>
        <taxon>Actinomycetes</taxon>
        <taxon>Mycobacteriales</taxon>
        <taxon>Corynebacteriaceae</taxon>
        <taxon>Corynebacterium</taxon>
    </lineage>
</organism>
<dbReference type="EC" id="2.7.7.18" evidence="1"/>
<dbReference type="EMBL" id="CR931997">
    <property type="protein sequence ID" value="CAI36726.1"/>
    <property type="molecule type" value="Genomic_DNA"/>
</dbReference>
<dbReference type="SMR" id="Q4JWT1"/>
<dbReference type="STRING" id="306537.jk0567"/>
<dbReference type="KEGG" id="cjk:jk0567"/>
<dbReference type="PATRIC" id="fig|306537.10.peg.579"/>
<dbReference type="eggNOG" id="COG1057">
    <property type="taxonomic scope" value="Bacteria"/>
</dbReference>
<dbReference type="HOGENOM" id="CLU_069765_1_1_11"/>
<dbReference type="UniPathway" id="UPA00253">
    <property type="reaction ID" value="UER00332"/>
</dbReference>
<dbReference type="Proteomes" id="UP000000545">
    <property type="component" value="Chromosome"/>
</dbReference>
<dbReference type="GO" id="GO:0005524">
    <property type="term" value="F:ATP binding"/>
    <property type="evidence" value="ECO:0007669"/>
    <property type="project" value="UniProtKB-KW"/>
</dbReference>
<dbReference type="GO" id="GO:0004515">
    <property type="term" value="F:nicotinate-nucleotide adenylyltransferase activity"/>
    <property type="evidence" value="ECO:0007669"/>
    <property type="project" value="UniProtKB-UniRule"/>
</dbReference>
<dbReference type="GO" id="GO:0009435">
    <property type="term" value="P:NAD biosynthetic process"/>
    <property type="evidence" value="ECO:0007669"/>
    <property type="project" value="UniProtKB-UniRule"/>
</dbReference>
<dbReference type="CDD" id="cd02165">
    <property type="entry name" value="NMNAT"/>
    <property type="match status" value="1"/>
</dbReference>
<dbReference type="FunFam" id="3.40.50.620:FF:000039">
    <property type="entry name" value="Probable nicotinate-nucleotide adenylyltransferase"/>
    <property type="match status" value="1"/>
</dbReference>
<dbReference type="Gene3D" id="3.40.50.620">
    <property type="entry name" value="HUPs"/>
    <property type="match status" value="1"/>
</dbReference>
<dbReference type="HAMAP" id="MF_00244">
    <property type="entry name" value="NaMN_adenylyltr"/>
    <property type="match status" value="1"/>
</dbReference>
<dbReference type="InterPro" id="IPR004821">
    <property type="entry name" value="Cyt_trans-like"/>
</dbReference>
<dbReference type="InterPro" id="IPR005248">
    <property type="entry name" value="NadD/NMNAT"/>
</dbReference>
<dbReference type="InterPro" id="IPR014729">
    <property type="entry name" value="Rossmann-like_a/b/a_fold"/>
</dbReference>
<dbReference type="NCBIfam" id="TIGR00125">
    <property type="entry name" value="cyt_tran_rel"/>
    <property type="match status" value="1"/>
</dbReference>
<dbReference type="NCBIfam" id="TIGR00482">
    <property type="entry name" value="nicotinate (nicotinamide) nucleotide adenylyltransferase"/>
    <property type="match status" value="1"/>
</dbReference>
<dbReference type="NCBIfam" id="NF000840">
    <property type="entry name" value="PRK00071.1-3"/>
    <property type="match status" value="1"/>
</dbReference>
<dbReference type="PANTHER" id="PTHR39321">
    <property type="entry name" value="NICOTINATE-NUCLEOTIDE ADENYLYLTRANSFERASE-RELATED"/>
    <property type="match status" value="1"/>
</dbReference>
<dbReference type="PANTHER" id="PTHR39321:SF3">
    <property type="entry name" value="PHOSPHOPANTETHEINE ADENYLYLTRANSFERASE"/>
    <property type="match status" value="1"/>
</dbReference>
<dbReference type="Pfam" id="PF01467">
    <property type="entry name" value="CTP_transf_like"/>
    <property type="match status" value="1"/>
</dbReference>
<dbReference type="SUPFAM" id="SSF52374">
    <property type="entry name" value="Nucleotidylyl transferase"/>
    <property type="match status" value="1"/>
</dbReference>
<proteinExistence type="inferred from homology"/>
<comment type="function">
    <text evidence="1">Catalyzes the reversible adenylation of nicotinate mononucleotide (NaMN) to nicotinic acid adenine dinucleotide (NaAD).</text>
</comment>
<comment type="catalytic activity">
    <reaction evidence="1">
        <text>nicotinate beta-D-ribonucleotide + ATP + H(+) = deamido-NAD(+) + diphosphate</text>
        <dbReference type="Rhea" id="RHEA:22860"/>
        <dbReference type="ChEBI" id="CHEBI:15378"/>
        <dbReference type="ChEBI" id="CHEBI:30616"/>
        <dbReference type="ChEBI" id="CHEBI:33019"/>
        <dbReference type="ChEBI" id="CHEBI:57502"/>
        <dbReference type="ChEBI" id="CHEBI:58437"/>
        <dbReference type="EC" id="2.7.7.18"/>
    </reaction>
</comment>
<comment type="pathway">
    <text evidence="1">Cofactor biosynthesis; NAD(+) biosynthesis; deamido-NAD(+) from nicotinate D-ribonucleotide: step 1/1.</text>
</comment>
<comment type="similarity">
    <text evidence="1">Belongs to the NadD family.</text>
</comment>
<name>NADD_CORJK</name>
<accession>Q4JWT1</accession>
<gene>
    <name evidence="1" type="primary">nadD</name>
    <name type="ordered locus">jk0567</name>
</gene>
<evidence type="ECO:0000255" key="1">
    <source>
        <dbReference type="HAMAP-Rule" id="MF_00244"/>
    </source>
</evidence>
<feature type="chain" id="PRO_0000310111" description="Probable nicotinate-nucleotide adenylyltransferase">
    <location>
        <begin position="1"/>
        <end position="199"/>
    </location>
</feature>
<keyword id="KW-0067">ATP-binding</keyword>
<keyword id="KW-0520">NAD</keyword>
<keyword id="KW-0547">Nucleotide-binding</keyword>
<keyword id="KW-0548">Nucleotidyltransferase</keyword>
<keyword id="KW-0662">Pyridine nucleotide biosynthesis</keyword>
<keyword id="KW-1185">Reference proteome</keyword>
<keyword id="KW-0808">Transferase</keyword>
<sequence>MGGTFDPIHNGHLVAGSEVADLFDLDVVIYVPTGQPWQKKHKKVSAAEDRYLMTVVATASNPRFLVSRVDIDRGGDTYTVDTLADIRAEYPEAELFFITGADALQKIVTWRDWEKIFDLAHFVGVTRPGYELPKDDEGSDDPLSKEVAAGRLSLVEIPAMAISSTDVRERATSGRPVWYLVPDGVVQYIAKHGMYVSSE</sequence>
<reference key="1">
    <citation type="journal article" date="2005" name="J. Bacteriol.">
        <title>Complete genome sequence and analysis of the multiresistant nosocomial pathogen Corynebacterium jeikeium K411, a lipid-requiring bacterium of the human skin flora.</title>
        <authorList>
            <person name="Tauch A."/>
            <person name="Kaiser O."/>
            <person name="Hain T."/>
            <person name="Goesmann A."/>
            <person name="Weisshaar B."/>
            <person name="Albersmeier A."/>
            <person name="Bekel T."/>
            <person name="Bischoff N."/>
            <person name="Brune I."/>
            <person name="Chakraborty T."/>
            <person name="Kalinowski J."/>
            <person name="Meyer F."/>
            <person name="Rupp O."/>
            <person name="Schneiker S."/>
            <person name="Viehoever P."/>
            <person name="Puehler A."/>
        </authorList>
    </citation>
    <scope>NUCLEOTIDE SEQUENCE [LARGE SCALE GENOMIC DNA]</scope>
    <source>
        <strain>K411</strain>
    </source>
</reference>